<gene>
    <name type="primary">Fkbp1a</name>
    <name type="synonym">Fkbp1</name>
</gene>
<proteinExistence type="evidence at protein level"/>
<reference key="1">
    <citation type="journal article" date="1994" name="Science">
        <title>Specific interaction of type I receptors of the TGF-beta family with the immunophilin FKBP-12.</title>
        <authorList>
            <person name="Wang T."/>
            <person name="Donahoe P.K."/>
            <person name="Zervos A.S."/>
        </authorList>
    </citation>
    <scope>NUCLEOTIDE SEQUENCE [MRNA]</scope>
    <source>
        <tissue>Heart</tissue>
    </source>
</reference>
<reference key="2">
    <citation type="journal article" date="1996" name="Circulation">
        <title>Identification of a novel FK506-binding protein in rat aortic smooth muscle cells.</title>
        <authorList>
            <person name="Marx S.O."/>
            <person name="Jayaraman T."/>
            <person name="Mehran R."/>
            <person name="Go L.O."/>
            <person name="Wiederrecht G.J."/>
            <person name="Marks A.R."/>
        </authorList>
    </citation>
    <scope>NUCLEOTIDE SEQUENCE [MRNA]</scope>
    <source>
        <tissue>Aortic smooth muscle</tissue>
    </source>
</reference>
<reference key="3">
    <citation type="journal article" date="1997" name="J. Biol. Chem.">
        <title>Cyclic ADP-ribose binds to FK506-binding protein 12.6 to release Ca2+ from islet microsomes.</title>
        <authorList>
            <person name="Noguchi N."/>
            <person name="Takasawa S."/>
            <person name="Nata K."/>
            <person name="Tohgo A."/>
            <person name="Kato I."/>
            <person name="Ikehata F."/>
            <person name="Yonekura H."/>
            <person name="Okamoto H."/>
        </authorList>
    </citation>
    <scope>NUCLEOTIDE SEQUENCE [MRNA]</scope>
    <source>
        <strain>Wistar</strain>
        <tissue>Pancreatic islet</tissue>
    </source>
</reference>
<reference key="4">
    <citation type="journal article" date="2004" name="Genome Res.">
        <title>The status, quality, and expansion of the NIH full-length cDNA project: the Mammalian Gene Collection (MGC).</title>
        <authorList>
            <consortium name="The MGC Project Team"/>
        </authorList>
    </citation>
    <scope>NUCLEOTIDE SEQUENCE [LARGE SCALE MRNA]</scope>
    <source>
        <tissue>Brain</tissue>
        <tissue>Heart</tissue>
    </source>
</reference>
<reference key="5">
    <citation type="journal article" date="2010" name="Circ. Res.">
        <title>Kinetics of FKBP12.6 binding to ryanodine receptors in permeabilized cardiac myocytes and effects on Ca sparks.</title>
        <authorList>
            <person name="Guo T."/>
            <person name="Cornea R.L."/>
            <person name="Huke S."/>
            <person name="Camors E."/>
            <person name="Yang Y."/>
            <person name="Picht E."/>
            <person name="Fruen B.R."/>
            <person name="Bers D.M."/>
        </authorList>
    </citation>
    <scope>INTERACTION WITH RYR2</scope>
    <scope>TISSUE SPECIFICITY</scope>
</reference>
<reference key="6">
    <citation type="journal article" date="2012" name="Nat. Commun.">
        <title>Quantitative maps of protein phosphorylation sites across 14 different rat organs and tissues.</title>
        <authorList>
            <person name="Lundby A."/>
            <person name="Secher A."/>
            <person name="Lage K."/>
            <person name="Nordsborg N.B."/>
            <person name="Dmytriyev A."/>
            <person name="Lundby C."/>
            <person name="Olsen J.V."/>
        </authorList>
    </citation>
    <scope>PHOSPHORYLATION [LARGE SCALE ANALYSIS] AT SER-10</scope>
    <scope>IDENTIFICATION BY MASS SPECTROMETRY [LARGE SCALE ANALYSIS]</scope>
</reference>
<feature type="chain" id="PRO_0000075292" description="Peptidyl-prolyl cis-trans isomerase FKBP1A">
    <location>
        <begin position="1"/>
        <end position="108"/>
    </location>
</feature>
<feature type="domain" description="PPIase FKBP-type" evidence="5">
    <location>
        <begin position="20"/>
        <end position="108"/>
    </location>
</feature>
<feature type="modified residue" description="Phosphoserine" evidence="8">
    <location>
        <position position="10"/>
    </location>
</feature>
<feature type="modified residue" description="N6-acetyllysine; alternate" evidence="2">
    <location>
        <position position="53"/>
    </location>
</feature>
<feature type="modified residue" description="N6-succinyllysine; alternate" evidence="2">
    <location>
        <position position="53"/>
    </location>
</feature>
<feature type="sequence conflict" description="In Ref. 3; BAA13153." evidence="7" ref="3">
    <original>P</original>
    <variation>T</variation>
    <location>
        <position position="89"/>
    </location>
</feature>
<protein>
    <recommendedName>
        <fullName>Peptidyl-prolyl cis-trans isomerase FKBP1A</fullName>
        <shortName>PPIase FKBP1A</shortName>
        <ecNumber evidence="3">5.2.1.8</ecNumber>
    </recommendedName>
    <alternativeName>
        <fullName>12 kDa FK506-binding protein</fullName>
        <shortName>12 kDa FKBP</shortName>
        <shortName>FKBP-12</shortName>
    </alternativeName>
    <alternativeName>
        <fullName>FK506-binding protein 1A</fullName>
        <shortName>FKBP-1A</shortName>
    </alternativeName>
    <alternativeName>
        <fullName>Immunophilin FKBP12</fullName>
    </alternativeName>
    <alternativeName>
        <fullName>Rotamase</fullName>
    </alternativeName>
</protein>
<organism>
    <name type="scientific">Rattus norvegicus</name>
    <name type="common">Rat</name>
    <dbReference type="NCBI Taxonomy" id="10116"/>
    <lineage>
        <taxon>Eukaryota</taxon>
        <taxon>Metazoa</taxon>
        <taxon>Chordata</taxon>
        <taxon>Craniata</taxon>
        <taxon>Vertebrata</taxon>
        <taxon>Euteleostomi</taxon>
        <taxon>Mammalia</taxon>
        <taxon>Eutheria</taxon>
        <taxon>Euarchontoglires</taxon>
        <taxon>Glires</taxon>
        <taxon>Rodentia</taxon>
        <taxon>Myomorpha</taxon>
        <taxon>Muroidea</taxon>
        <taxon>Muridae</taxon>
        <taxon>Murinae</taxon>
        <taxon>Rattus</taxon>
    </lineage>
</organism>
<sequence>MGVQVETISSGDGRTFPKRGQTCVVHYTGMLEDGKKFDSSRDRNKPFKFTLGKQEVIRGWEEGVAQMSVGQRAKLIISPDYAYGATGHPGIIPPHATLVFDVELLKLE</sequence>
<dbReference type="EC" id="5.2.1.8" evidence="3"/>
<dbReference type="EMBL" id="U09386">
    <property type="protein sequence ID" value="AAA19163.1"/>
    <property type="molecule type" value="mRNA"/>
</dbReference>
<dbReference type="EMBL" id="U69485">
    <property type="protein sequence ID" value="AAB48933.1"/>
    <property type="molecule type" value="mRNA"/>
</dbReference>
<dbReference type="EMBL" id="D86641">
    <property type="protein sequence ID" value="BAA13153.1"/>
    <property type="molecule type" value="mRNA"/>
</dbReference>
<dbReference type="EMBL" id="BC070519">
    <property type="protein sequence ID" value="AAH70519.3"/>
    <property type="molecule type" value="mRNA"/>
</dbReference>
<dbReference type="EMBL" id="BC126071">
    <property type="protein sequence ID" value="AAI26072.1"/>
    <property type="molecule type" value="mRNA"/>
</dbReference>
<dbReference type="RefSeq" id="NP_037234.2">
    <property type="nucleotide sequence ID" value="NM_013102.3"/>
</dbReference>
<dbReference type="BMRB" id="Q62658"/>
<dbReference type="SMR" id="Q62658"/>
<dbReference type="BioGRID" id="247668">
    <property type="interactions" value="4"/>
</dbReference>
<dbReference type="CORUM" id="Q62658"/>
<dbReference type="FunCoup" id="Q62658">
    <property type="interactions" value="3043"/>
</dbReference>
<dbReference type="IntAct" id="Q62658">
    <property type="interactions" value="1"/>
</dbReference>
<dbReference type="MINT" id="Q62658"/>
<dbReference type="STRING" id="10116.ENSRNOP00000012608"/>
<dbReference type="ChEMBL" id="CHEMBL2095"/>
<dbReference type="DrugCentral" id="Q62658"/>
<dbReference type="GuidetoPHARMACOLOGY" id="2609"/>
<dbReference type="iPTMnet" id="Q62658"/>
<dbReference type="PhosphoSitePlus" id="Q62658"/>
<dbReference type="jPOST" id="Q62658"/>
<dbReference type="PaxDb" id="10116-ENSRNOP00000012608"/>
<dbReference type="GeneID" id="25639"/>
<dbReference type="KEGG" id="rno:25639"/>
<dbReference type="UCSC" id="RGD:2617">
    <property type="organism name" value="rat"/>
</dbReference>
<dbReference type="AGR" id="RGD:2617"/>
<dbReference type="CTD" id="2280"/>
<dbReference type="RGD" id="2617">
    <property type="gene designation" value="Fkbp1a"/>
</dbReference>
<dbReference type="VEuPathDB" id="HostDB:ENSRNOG00000008822"/>
<dbReference type="eggNOG" id="KOG0544">
    <property type="taxonomic scope" value="Eukaryota"/>
</dbReference>
<dbReference type="HOGENOM" id="CLU_013615_12_1_1"/>
<dbReference type="InParanoid" id="Q62658"/>
<dbReference type="OrthoDB" id="1214at9989"/>
<dbReference type="PhylomeDB" id="Q62658"/>
<dbReference type="Reactome" id="R-RNO-166208">
    <property type="pathway name" value="mTORC1-mediated signalling"/>
</dbReference>
<dbReference type="Reactome" id="R-RNO-2025928">
    <property type="pathway name" value="Calcineurin activates NFAT"/>
</dbReference>
<dbReference type="Reactome" id="R-RNO-2173789">
    <property type="pathway name" value="TGF-beta receptor signaling activates SMADs"/>
</dbReference>
<dbReference type="PRO" id="PR:Q62658"/>
<dbReference type="Proteomes" id="UP000002494">
    <property type="component" value="Chromosome 3"/>
</dbReference>
<dbReference type="Bgee" id="ENSRNOG00000008822">
    <property type="expression patterns" value="Expressed in Ammon's horn and 20 other cell types or tissues"/>
</dbReference>
<dbReference type="GO" id="GO:0043679">
    <property type="term" value="C:axon terminus"/>
    <property type="evidence" value="ECO:0000314"/>
    <property type="project" value="RGD"/>
</dbReference>
<dbReference type="GO" id="GO:0005737">
    <property type="term" value="C:cytoplasm"/>
    <property type="evidence" value="ECO:0000266"/>
    <property type="project" value="RGD"/>
</dbReference>
<dbReference type="GO" id="GO:0098562">
    <property type="term" value="C:cytoplasmic side of membrane"/>
    <property type="evidence" value="ECO:0000250"/>
    <property type="project" value="UniProtKB"/>
</dbReference>
<dbReference type="GO" id="GO:0005829">
    <property type="term" value="C:cytosol"/>
    <property type="evidence" value="ECO:0000266"/>
    <property type="project" value="RGD"/>
</dbReference>
<dbReference type="GO" id="GO:0016020">
    <property type="term" value="C:membrane"/>
    <property type="evidence" value="ECO:0000266"/>
    <property type="project" value="RGD"/>
</dbReference>
<dbReference type="GO" id="GO:1990425">
    <property type="term" value="C:ryanodine receptor complex"/>
    <property type="evidence" value="ECO:0000250"/>
    <property type="project" value="UniProtKB"/>
</dbReference>
<dbReference type="GO" id="GO:0016529">
    <property type="term" value="C:sarcoplasmic reticulum"/>
    <property type="evidence" value="ECO:0000250"/>
    <property type="project" value="UniProtKB"/>
</dbReference>
<dbReference type="GO" id="GO:0033017">
    <property type="term" value="C:sarcoplasmic reticulum membrane"/>
    <property type="evidence" value="ECO:0000266"/>
    <property type="project" value="RGD"/>
</dbReference>
<dbReference type="GO" id="GO:0045202">
    <property type="term" value="C:synapse"/>
    <property type="evidence" value="ECO:0000266"/>
    <property type="project" value="RGD"/>
</dbReference>
<dbReference type="GO" id="GO:0030018">
    <property type="term" value="C:Z disc"/>
    <property type="evidence" value="ECO:0000266"/>
    <property type="project" value="RGD"/>
</dbReference>
<dbReference type="GO" id="GO:0070697">
    <property type="term" value="F:activin receptor binding"/>
    <property type="evidence" value="ECO:0000266"/>
    <property type="project" value="RGD"/>
</dbReference>
<dbReference type="GO" id="GO:0005246">
    <property type="term" value="F:calcium channel regulator activity"/>
    <property type="evidence" value="ECO:0000266"/>
    <property type="project" value="RGD"/>
</dbReference>
<dbReference type="GO" id="GO:0019899">
    <property type="term" value="F:enzyme binding"/>
    <property type="evidence" value="ECO:0000353"/>
    <property type="project" value="RGD"/>
</dbReference>
<dbReference type="GO" id="GO:0005528">
    <property type="term" value="F:FK506 binding"/>
    <property type="evidence" value="ECO:0000314"/>
    <property type="project" value="RGD"/>
</dbReference>
<dbReference type="GO" id="GO:0030544">
    <property type="term" value="F:Hsp70 protein binding"/>
    <property type="evidence" value="ECO:0000353"/>
    <property type="project" value="RGD"/>
</dbReference>
<dbReference type="GO" id="GO:0070411">
    <property type="term" value="F:I-SMAD binding"/>
    <property type="evidence" value="ECO:0000266"/>
    <property type="project" value="RGD"/>
</dbReference>
<dbReference type="GO" id="GO:0042802">
    <property type="term" value="F:identical protein binding"/>
    <property type="evidence" value="ECO:0000266"/>
    <property type="project" value="RGD"/>
</dbReference>
<dbReference type="GO" id="GO:0003755">
    <property type="term" value="F:peptidyl-prolyl cis-trans isomerase activity"/>
    <property type="evidence" value="ECO:0000266"/>
    <property type="project" value="RGD"/>
</dbReference>
<dbReference type="GO" id="GO:0030547">
    <property type="term" value="F:signaling receptor inhibitor activity"/>
    <property type="evidence" value="ECO:0000266"/>
    <property type="project" value="RGD"/>
</dbReference>
<dbReference type="GO" id="GO:0005160">
    <property type="term" value="F:transforming growth factor beta receptor binding"/>
    <property type="evidence" value="ECO:0000314"/>
    <property type="project" value="BHF-UCL"/>
</dbReference>
<dbReference type="GO" id="GO:0044325">
    <property type="term" value="F:transmembrane transporter binding"/>
    <property type="evidence" value="ECO:0000266"/>
    <property type="project" value="RGD"/>
</dbReference>
<dbReference type="GO" id="GO:0034713">
    <property type="term" value="F:type I transforming growth factor beta receptor binding"/>
    <property type="evidence" value="ECO:0000314"/>
    <property type="project" value="BHF-UCL"/>
</dbReference>
<dbReference type="GO" id="GO:1990000">
    <property type="term" value="P:amyloid fibril formation"/>
    <property type="evidence" value="ECO:0000266"/>
    <property type="project" value="RGD"/>
</dbReference>
<dbReference type="GO" id="GO:0019221">
    <property type="term" value="P:cytokine-mediated signaling pathway"/>
    <property type="evidence" value="ECO:0000266"/>
    <property type="project" value="RGD"/>
</dbReference>
<dbReference type="GO" id="GO:0003007">
    <property type="term" value="P:heart morphogenesis"/>
    <property type="evidence" value="ECO:0000266"/>
    <property type="project" value="RGD"/>
</dbReference>
<dbReference type="GO" id="GO:0060347">
    <property type="term" value="P:heart trabecula formation"/>
    <property type="evidence" value="ECO:0000266"/>
    <property type="project" value="RGD"/>
</dbReference>
<dbReference type="GO" id="GO:0006936">
    <property type="term" value="P:muscle contraction"/>
    <property type="evidence" value="ECO:0000266"/>
    <property type="project" value="RGD"/>
</dbReference>
<dbReference type="GO" id="GO:0032926">
    <property type="term" value="P:negative regulation of activin receptor signaling pathway"/>
    <property type="evidence" value="ECO:0000266"/>
    <property type="project" value="RGD"/>
</dbReference>
<dbReference type="GO" id="GO:0030512">
    <property type="term" value="P:negative regulation of transforming growth factor beta receptor signaling pathway"/>
    <property type="evidence" value="ECO:0000266"/>
    <property type="project" value="RGD"/>
</dbReference>
<dbReference type="GO" id="GO:1902991">
    <property type="term" value="P:regulation of amyloid precursor protein catabolic process"/>
    <property type="evidence" value="ECO:0000266"/>
    <property type="project" value="RGD"/>
</dbReference>
<dbReference type="GO" id="GO:0050776">
    <property type="term" value="P:regulation of immune response"/>
    <property type="evidence" value="ECO:0000266"/>
    <property type="project" value="RGD"/>
</dbReference>
<dbReference type="GO" id="GO:0032880">
    <property type="term" value="P:regulation of protein localization"/>
    <property type="evidence" value="ECO:0000266"/>
    <property type="project" value="RGD"/>
</dbReference>
<dbReference type="GO" id="GO:0014809">
    <property type="term" value="P:regulation of skeletal muscle contraction by regulation of release of sequestered calcium ion"/>
    <property type="evidence" value="ECO:0000266"/>
    <property type="project" value="RGD"/>
</dbReference>
<dbReference type="GO" id="GO:0051209">
    <property type="term" value="P:release of sequestered calcium ion into cytosol"/>
    <property type="evidence" value="ECO:0000266"/>
    <property type="project" value="RGD"/>
</dbReference>
<dbReference type="GO" id="GO:0031000">
    <property type="term" value="P:response to caffeine"/>
    <property type="evidence" value="ECO:0000266"/>
    <property type="project" value="RGD"/>
</dbReference>
<dbReference type="GO" id="GO:0010039">
    <property type="term" value="P:response to iron ion"/>
    <property type="evidence" value="ECO:0000270"/>
    <property type="project" value="RGD"/>
</dbReference>
<dbReference type="GO" id="GO:0097435">
    <property type="term" value="P:supramolecular fiber organization"/>
    <property type="evidence" value="ECO:0000266"/>
    <property type="project" value="RGD"/>
</dbReference>
<dbReference type="GO" id="GO:0042098">
    <property type="term" value="P:T cell proliferation"/>
    <property type="evidence" value="ECO:0000266"/>
    <property type="project" value="RGD"/>
</dbReference>
<dbReference type="GO" id="GO:0055010">
    <property type="term" value="P:ventricular cardiac muscle tissue morphogenesis"/>
    <property type="evidence" value="ECO:0000266"/>
    <property type="project" value="RGD"/>
</dbReference>
<dbReference type="FunFam" id="3.10.50.40:FF:000024">
    <property type="entry name" value="Peptidyl-prolyl cis-trans isomerase FKBP1A"/>
    <property type="match status" value="1"/>
</dbReference>
<dbReference type="Gene3D" id="3.10.50.40">
    <property type="match status" value="1"/>
</dbReference>
<dbReference type="InterPro" id="IPR050689">
    <property type="entry name" value="FKBP-type_PPIase"/>
</dbReference>
<dbReference type="InterPro" id="IPR046357">
    <property type="entry name" value="PPIase_dom_sf"/>
</dbReference>
<dbReference type="InterPro" id="IPR001179">
    <property type="entry name" value="PPIase_FKBP_dom"/>
</dbReference>
<dbReference type="PANTHER" id="PTHR10516">
    <property type="entry name" value="PEPTIDYL-PROLYL CIS-TRANS ISOMERASE"/>
    <property type="match status" value="1"/>
</dbReference>
<dbReference type="PANTHER" id="PTHR10516:SF301">
    <property type="entry name" value="PEPTIDYL-PROLYL CIS-TRANS ISOMERASE FKBP1A-RELATED"/>
    <property type="match status" value="1"/>
</dbReference>
<dbReference type="Pfam" id="PF00254">
    <property type="entry name" value="FKBP_C"/>
    <property type="match status" value="1"/>
</dbReference>
<dbReference type="SUPFAM" id="SSF54534">
    <property type="entry name" value="FKBP-like"/>
    <property type="match status" value="1"/>
</dbReference>
<dbReference type="PROSITE" id="PS50059">
    <property type="entry name" value="FKBP_PPIASE"/>
    <property type="match status" value="1"/>
</dbReference>
<comment type="function">
    <text evidence="1">Keeps in an inactive conformation TGFBR1, the TGF-beta type I serine/threonine kinase receptor, preventing TGF-beta receptor activation in absence of ligand. Recruits SMAD7 to ACVR1B which prevents the association of SMAD2 and SMAD3 with the activin receptor complex, thereby blocking the activin signal. May modulate the RYR1 calcium channel activity. PPIases accelerate the folding of proteins. It catalyzes the cis-trans isomerization of proline imidic peptide bonds in oligopeptides (By similarity).</text>
</comment>
<comment type="catalytic activity">
    <reaction evidence="3">
        <text>[protein]-peptidylproline (omega=180) = [protein]-peptidylproline (omega=0)</text>
        <dbReference type="Rhea" id="RHEA:16237"/>
        <dbReference type="Rhea" id="RHEA-COMP:10747"/>
        <dbReference type="Rhea" id="RHEA-COMP:10748"/>
        <dbReference type="ChEBI" id="CHEBI:83833"/>
        <dbReference type="ChEBI" id="CHEBI:83834"/>
        <dbReference type="EC" id="5.2.1.8"/>
    </reaction>
</comment>
<comment type="activity regulation">
    <text>Inhibited by both FK506 and rapamycin.</text>
</comment>
<comment type="subunit">
    <text evidence="2 3 4 6">Interacts with TGFBR1; prevents TGFBR1 phosphorylation by TGFBR2 and stabilizes it in the inactive conformation (By similarity). Interacts with ACVR1B and SMAD7. Identified in a complex composed of RYR1, PDE4D, PKA, FKBP1A and protein phosphatase 1 (PP1) (By similarity). Interacts directly with RYR2 (PubMed:20431056). Interacts directly with RYR3 (By similarity). Interacts directly with RYR1 (By similarity). Interacts with GLMN; rapamycin and FK506 abolish the interaction with GLMN in a dose dependent manner (By similarity).</text>
</comment>
<comment type="subcellular location">
    <subcellularLocation>
        <location evidence="3">Cytoplasm</location>
        <location evidence="3">Cytosol</location>
    </subcellularLocation>
    <subcellularLocation>
        <location evidence="4">Sarcoplasmic reticulum membrane</location>
        <topology evidence="4">Peripheral membrane protein</topology>
        <orientation evidence="4">Cytoplasmic side</orientation>
    </subcellularLocation>
</comment>
<comment type="tissue specificity">
    <text evidence="6">Ubiquitous.</text>
</comment>
<comment type="similarity">
    <text evidence="7">Belongs to the FKBP-type PPIase family. FKBP1 subfamily.</text>
</comment>
<keyword id="KW-0007">Acetylation</keyword>
<keyword id="KW-0963">Cytoplasm</keyword>
<keyword id="KW-0413">Isomerase</keyword>
<keyword id="KW-0472">Membrane</keyword>
<keyword id="KW-0597">Phosphoprotein</keyword>
<keyword id="KW-1185">Reference proteome</keyword>
<keyword id="KW-0697">Rotamase</keyword>
<keyword id="KW-0703">Sarcoplasmic reticulum</keyword>
<evidence type="ECO:0000250" key="1"/>
<evidence type="ECO:0000250" key="2">
    <source>
        <dbReference type="UniProtKB" id="P26883"/>
    </source>
</evidence>
<evidence type="ECO:0000250" key="3">
    <source>
        <dbReference type="UniProtKB" id="P62942"/>
    </source>
</evidence>
<evidence type="ECO:0000250" key="4">
    <source>
        <dbReference type="UniProtKB" id="P62943"/>
    </source>
</evidence>
<evidence type="ECO:0000255" key="5">
    <source>
        <dbReference type="PROSITE-ProRule" id="PRU00277"/>
    </source>
</evidence>
<evidence type="ECO:0000269" key="6">
    <source>
    </source>
</evidence>
<evidence type="ECO:0000305" key="7"/>
<evidence type="ECO:0007744" key="8">
    <source>
    </source>
</evidence>
<accession>Q62658</accession>
<accession>A0JN04</accession>
<accession>P97533</accession>
<name>FKB1A_RAT</name>